<keyword id="KW-0007">Acetylation</keyword>
<keyword id="KW-0551">Lipid droplet</keyword>
<keyword id="KW-0472">Membrane</keyword>
<keyword id="KW-1185">Reference proteome</keyword>
<keyword id="KW-0812">Transmembrane</keyword>
<keyword id="KW-1133">Transmembrane helix</keyword>
<organism>
    <name type="scientific">Arabidopsis thaliana</name>
    <name type="common">Mouse-ear cress</name>
    <dbReference type="NCBI Taxonomy" id="3702"/>
    <lineage>
        <taxon>Eukaryota</taxon>
        <taxon>Viridiplantae</taxon>
        <taxon>Streptophyta</taxon>
        <taxon>Embryophyta</taxon>
        <taxon>Tracheophyta</taxon>
        <taxon>Spermatophyta</taxon>
        <taxon>Magnoliopsida</taxon>
        <taxon>eudicotyledons</taxon>
        <taxon>Gunneridae</taxon>
        <taxon>Pentapetalae</taxon>
        <taxon>rosids</taxon>
        <taxon>malvids</taxon>
        <taxon>Brassicales</taxon>
        <taxon>Brassicaceae</taxon>
        <taxon>Camelineae</taxon>
        <taxon>Arabidopsis</taxon>
    </lineage>
</organism>
<evidence type="ECO:0000250" key="1"/>
<evidence type="ECO:0000250" key="2">
    <source>
        <dbReference type="UniProtKB" id="C3S7F1"/>
    </source>
</evidence>
<evidence type="ECO:0000255" key="3"/>
<evidence type="ECO:0000269" key="4">
    <source>
    </source>
</evidence>
<evidence type="ECO:0000305" key="5"/>
<dbReference type="EMBL" id="Z54164">
    <property type="protein sequence ID" value="CAA90877.1"/>
    <property type="molecule type" value="mRNA"/>
</dbReference>
<dbReference type="EMBL" id="X91918">
    <property type="protein sequence ID" value="CAA63011.1"/>
    <property type="molecule type" value="mRNA"/>
</dbReference>
<dbReference type="EMBL" id="AB018114">
    <property type="protein sequence ID" value="BAB02690.1"/>
    <property type="molecule type" value="Genomic_DNA"/>
</dbReference>
<dbReference type="EMBL" id="CP002686">
    <property type="protein sequence ID" value="AEE77349.1"/>
    <property type="molecule type" value="Genomic_DNA"/>
</dbReference>
<dbReference type="EMBL" id="CP002686">
    <property type="protein sequence ID" value="ANM64789.1"/>
    <property type="molecule type" value="Genomic_DNA"/>
</dbReference>
<dbReference type="EMBL" id="AY054540">
    <property type="protein sequence ID" value="AAK96731.1"/>
    <property type="molecule type" value="mRNA"/>
</dbReference>
<dbReference type="EMBL" id="AY064657">
    <property type="protein sequence ID" value="AAL47366.1"/>
    <property type="molecule type" value="mRNA"/>
</dbReference>
<dbReference type="EMBL" id="AY085886">
    <property type="protein sequence ID" value="AAM63098.1"/>
    <property type="molecule type" value="mRNA"/>
</dbReference>
<dbReference type="EMBL" id="Z27260">
    <property type="protein sequence ID" value="CAA81771.1"/>
    <property type="molecule type" value="mRNA"/>
</dbReference>
<dbReference type="EMBL" id="Z29859">
    <property type="protein sequence ID" value="CAA82822.1"/>
    <property type="molecule type" value="mRNA"/>
</dbReference>
<dbReference type="PIR" id="S71286">
    <property type="entry name" value="S71286"/>
</dbReference>
<dbReference type="SMR" id="Q42431"/>
<dbReference type="BioGRID" id="7718">
    <property type="interactions" value="2"/>
</dbReference>
<dbReference type="FunCoup" id="Q42431">
    <property type="interactions" value="155"/>
</dbReference>
<dbReference type="STRING" id="3702.Q42431"/>
<dbReference type="PaxDb" id="3702-AT3G27660.1"/>
<dbReference type="ProteomicsDB" id="250905"/>
<dbReference type="EnsemblPlants" id="AT3G27660.1">
    <property type="protein sequence ID" value="AT3G27660.1"/>
    <property type="gene ID" value="AT3G27660"/>
</dbReference>
<dbReference type="EnsemblPlants" id="AT3G27660.2">
    <property type="protein sequence ID" value="AT3G27660.2"/>
    <property type="gene ID" value="AT3G27660"/>
</dbReference>
<dbReference type="Gramene" id="AT3G27660.1">
    <property type="protein sequence ID" value="AT3G27660.1"/>
    <property type="gene ID" value="AT3G27660"/>
</dbReference>
<dbReference type="Gramene" id="AT3G27660.2">
    <property type="protein sequence ID" value="AT3G27660.2"/>
    <property type="gene ID" value="AT3G27660"/>
</dbReference>
<dbReference type="KEGG" id="ath:AT3G27660"/>
<dbReference type="Araport" id="AT3G27660"/>
<dbReference type="TAIR" id="AT3G27660">
    <property type="gene designation" value="OLEO4"/>
</dbReference>
<dbReference type="eggNOG" id="ENOG502S1R0">
    <property type="taxonomic scope" value="Eukaryota"/>
</dbReference>
<dbReference type="HOGENOM" id="CLU_101983_1_0_1"/>
<dbReference type="InParanoid" id="Q42431"/>
<dbReference type="OMA" id="GMKGKEM"/>
<dbReference type="OrthoDB" id="1929188at2759"/>
<dbReference type="PhylomeDB" id="Q42431"/>
<dbReference type="PRO" id="PR:Q42431"/>
<dbReference type="Proteomes" id="UP000006548">
    <property type="component" value="Chromosome 3"/>
</dbReference>
<dbReference type="ExpressionAtlas" id="Q42431">
    <property type="expression patterns" value="baseline and differential"/>
</dbReference>
<dbReference type="GO" id="GO:0016020">
    <property type="term" value="C:membrane"/>
    <property type="evidence" value="ECO:0007669"/>
    <property type="project" value="UniProtKB-SubCell"/>
</dbReference>
<dbReference type="GO" id="GO:0012511">
    <property type="term" value="C:monolayer-surrounded lipid storage body"/>
    <property type="evidence" value="ECO:0007669"/>
    <property type="project" value="InterPro"/>
</dbReference>
<dbReference type="GO" id="GO:0050826">
    <property type="term" value="P:response to freezing"/>
    <property type="evidence" value="ECO:0000315"/>
    <property type="project" value="TAIR"/>
</dbReference>
<dbReference type="GO" id="GO:0009845">
    <property type="term" value="P:seed germination"/>
    <property type="evidence" value="ECO:0000316"/>
    <property type="project" value="TAIR"/>
</dbReference>
<dbReference type="GO" id="GO:0010344">
    <property type="term" value="P:seed oilbody biogenesis"/>
    <property type="evidence" value="ECO:0000316"/>
    <property type="project" value="TAIR"/>
</dbReference>
<dbReference type="InterPro" id="IPR000136">
    <property type="entry name" value="Oleosin"/>
</dbReference>
<dbReference type="PANTHER" id="PTHR33203">
    <property type="entry name" value="OLEOSIN"/>
    <property type="match status" value="1"/>
</dbReference>
<dbReference type="PANTHER" id="PTHR33203:SF44">
    <property type="entry name" value="OLEOSIN 20.3 KDA"/>
    <property type="match status" value="1"/>
</dbReference>
<dbReference type="Pfam" id="PF01277">
    <property type="entry name" value="Oleosin"/>
    <property type="match status" value="1"/>
</dbReference>
<dbReference type="PROSITE" id="PS00811">
    <property type="entry name" value="OLEOSINS"/>
    <property type="match status" value="1"/>
</dbReference>
<comment type="function">
    <text evidence="1">May have a structural role to stabilize the lipid body during desiccation of the seed by preventing coalescence of the oil. Probably interacts with both lipid and phospholipid moieties of lipid bodies. May also provide recognition signals for specific lipase anchorage in lipolysis during seedling growth (By similarity).</text>
</comment>
<comment type="subcellular location">
    <subcellularLocation>
        <location evidence="1">Lipid droplet</location>
    </subcellularLocation>
    <subcellularLocation>
        <location evidence="1">Membrane</location>
        <topology evidence="1">Multi-pass membrane protein</topology>
    </subcellularLocation>
    <text evidence="1">Surface of oil bodies. Oleosins exist at a monolayer lipid/water interface (By similarity).</text>
</comment>
<comment type="developmental stage">
    <text evidence="4">Expression increases continuously throughout embryonic development.</text>
</comment>
<comment type="similarity">
    <text evidence="5">Belongs to the oleosin family.</text>
</comment>
<feature type="initiator methionine" description="Removed" evidence="2">
    <location>
        <position position="1"/>
    </location>
</feature>
<feature type="chain" id="PRO_0000108130" description="Oleosin 20.3 kDa">
    <location>
        <begin position="2"/>
        <end position="191"/>
    </location>
</feature>
<feature type="transmembrane region" description="Helical" evidence="3">
    <location>
        <begin position="52"/>
        <end position="72"/>
    </location>
</feature>
<feature type="transmembrane region" description="Helical" evidence="3">
    <location>
        <begin position="99"/>
        <end position="119"/>
    </location>
</feature>
<feature type="region of interest" description="Polar">
    <location>
        <begin position="2"/>
        <end position="54"/>
    </location>
</feature>
<feature type="region of interest" description="Hydrophobic">
    <location>
        <begin position="55"/>
        <end position="128"/>
    </location>
</feature>
<feature type="modified residue" description="N-acetylalanine" evidence="2">
    <location>
        <position position="2"/>
    </location>
</feature>
<feature type="sequence conflict" description="In Ref. 3." evidence="5" ref="3">
    <original>L</original>
    <variation>AI</variation>
    <location>
        <position position="66"/>
    </location>
</feature>
<feature type="sequence conflict" description="In Ref. 3." evidence="5" ref="3">
    <original>L</original>
    <variation>I</variation>
    <location>
        <position position="68"/>
    </location>
</feature>
<feature type="sequence conflict" description="In Ref. 7; CAA82822." evidence="5" ref="7">
    <original>NYLRGT</original>
    <variation>QLPPWA</variation>
    <location>
        <begin position="127"/>
        <end position="132"/>
    </location>
</feature>
<feature type="sequence conflict" description="In Ref. 7; CAA82822." evidence="5" ref="7">
    <original>L</original>
    <variation>V</variation>
    <location>
        <position position="140"/>
    </location>
</feature>
<feature type="sequence conflict" description="In Ref. 6; AAM63098." evidence="5" ref="6">
    <original>G</original>
    <variation>S</variation>
    <location>
        <position position="152"/>
    </location>
</feature>
<feature type="sequence conflict" description="In Ref. 2; CAA63011." evidence="5" ref="2">
    <original>S</original>
    <variation>P</variation>
    <location>
        <position position="191"/>
    </location>
</feature>
<reference key="1">
    <citation type="journal article" date="1996" name="Plant Mol. Biol.">
        <title>Two new oleosin isoforms with altered expression patterns in seeds of the Arabidopsis mutant fus3.</title>
        <authorList>
            <person name="Kirik V."/>
            <person name="Koelle K."/>
            <person name="Balzer H.-J."/>
            <person name="Baeumlein H."/>
        </authorList>
    </citation>
    <scope>NUCLEOTIDE SEQUENCE [MRNA]</scope>
    <scope>DEVELOPMENTAL STAGE</scope>
    <source>
        <tissue>Silique</tissue>
    </source>
</reference>
<reference key="2">
    <citation type="submission" date="1995-10" db="EMBL/GenBank/DDBJ databases">
        <authorList>
            <person name="Raynal M."/>
        </authorList>
    </citation>
    <scope>NUCLEOTIDE SEQUENCE [MRNA]</scope>
    <source>
        <strain>cv. Columbia</strain>
        <tissue>Dry seed</tissue>
    </source>
</reference>
<reference key="3">
    <citation type="journal article" date="2000" name="DNA Res.">
        <title>Structural analysis of Arabidopsis thaliana chromosome 3. I. Sequence features of the regions of 4,504,864 bp covered by sixty P1 and TAC clones.</title>
        <authorList>
            <person name="Sato S."/>
            <person name="Nakamura Y."/>
            <person name="Kaneko T."/>
            <person name="Katoh T."/>
            <person name="Asamizu E."/>
            <person name="Tabata S."/>
        </authorList>
    </citation>
    <scope>NUCLEOTIDE SEQUENCE [LARGE SCALE GENOMIC DNA]</scope>
    <source>
        <strain>cv. Columbia</strain>
    </source>
</reference>
<reference key="4">
    <citation type="journal article" date="2017" name="Plant J.">
        <title>Araport11: a complete reannotation of the Arabidopsis thaliana reference genome.</title>
        <authorList>
            <person name="Cheng C.Y."/>
            <person name="Krishnakumar V."/>
            <person name="Chan A.P."/>
            <person name="Thibaud-Nissen F."/>
            <person name="Schobel S."/>
            <person name="Town C.D."/>
        </authorList>
    </citation>
    <scope>GENOME REANNOTATION</scope>
    <source>
        <strain>cv. Columbia</strain>
    </source>
</reference>
<reference key="5">
    <citation type="journal article" date="2003" name="Science">
        <title>Empirical analysis of transcriptional activity in the Arabidopsis genome.</title>
        <authorList>
            <person name="Yamada K."/>
            <person name="Lim J."/>
            <person name="Dale J.M."/>
            <person name="Chen H."/>
            <person name="Shinn P."/>
            <person name="Palm C.J."/>
            <person name="Southwick A.M."/>
            <person name="Wu H.C."/>
            <person name="Kim C.J."/>
            <person name="Nguyen M."/>
            <person name="Pham P.K."/>
            <person name="Cheuk R.F."/>
            <person name="Karlin-Newmann G."/>
            <person name="Liu S.X."/>
            <person name="Lam B."/>
            <person name="Sakano H."/>
            <person name="Wu T."/>
            <person name="Yu G."/>
            <person name="Miranda M."/>
            <person name="Quach H.L."/>
            <person name="Tripp M."/>
            <person name="Chang C.H."/>
            <person name="Lee J.M."/>
            <person name="Toriumi M.J."/>
            <person name="Chan M.M."/>
            <person name="Tang C.C."/>
            <person name="Onodera C.S."/>
            <person name="Deng J.M."/>
            <person name="Akiyama K."/>
            <person name="Ansari Y."/>
            <person name="Arakawa T."/>
            <person name="Banh J."/>
            <person name="Banno F."/>
            <person name="Bowser L."/>
            <person name="Brooks S.Y."/>
            <person name="Carninci P."/>
            <person name="Chao Q."/>
            <person name="Choy N."/>
            <person name="Enju A."/>
            <person name="Goldsmith A.D."/>
            <person name="Gurjal M."/>
            <person name="Hansen N.F."/>
            <person name="Hayashizaki Y."/>
            <person name="Johnson-Hopson C."/>
            <person name="Hsuan V.W."/>
            <person name="Iida K."/>
            <person name="Karnes M."/>
            <person name="Khan S."/>
            <person name="Koesema E."/>
            <person name="Ishida J."/>
            <person name="Jiang P.X."/>
            <person name="Jones T."/>
            <person name="Kawai J."/>
            <person name="Kamiya A."/>
            <person name="Meyers C."/>
            <person name="Nakajima M."/>
            <person name="Narusaka M."/>
            <person name="Seki M."/>
            <person name="Sakurai T."/>
            <person name="Satou M."/>
            <person name="Tamse R."/>
            <person name="Vaysberg M."/>
            <person name="Wallender E.K."/>
            <person name="Wong C."/>
            <person name="Yamamura Y."/>
            <person name="Yuan S."/>
            <person name="Shinozaki K."/>
            <person name="Davis R.W."/>
            <person name="Theologis A."/>
            <person name="Ecker J.R."/>
        </authorList>
    </citation>
    <scope>NUCLEOTIDE SEQUENCE [LARGE SCALE MRNA]</scope>
    <source>
        <strain>cv. Columbia</strain>
    </source>
</reference>
<reference key="6">
    <citation type="submission" date="2002-03" db="EMBL/GenBank/DDBJ databases">
        <title>Full-length cDNA from Arabidopsis thaliana.</title>
        <authorList>
            <person name="Brover V.V."/>
            <person name="Troukhan M.E."/>
            <person name="Alexandrov N.A."/>
            <person name="Lu Y.-P."/>
            <person name="Flavell R.B."/>
            <person name="Feldmann K.A."/>
        </authorList>
    </citation>
    <scope>NUCLEOTIDE SEQUENCE [LARGE SCALE MRNA]</scope>
</reference>
<reference key="7">
    <citation type="journal article" date="1996" name="Plant J.">
        <title>Further progress towards a catalogue of all Arabidopsis genes: analysis of a set of 5000 non-redundant ESTs.</title>
        <authorList>
            <person name="Cooke R."/>
            <person name="Raynal M."/>
            <person name="Laudie M."/>
            <person name="Grellet F."/>
            <person name="Delseny M."/>
            <person name="Morris P.-C."/>
            <person name="Guerrier D."/>
            <person name="Giraudat J."/>
            <person name="Quigley F."/>
            <person name="Clabault G."/>
            <person name="Li Y.-F."/>
            <person name="Mache R."/>
            <person name="Krivitzky M."/>
            <person name="Gy I.J.-J."/>
            <person name="Kreis M."/>
            <person name="Lecharny A."/>
            <person name="Parmentier Y."/>
            <person name="Marbach J."/>
            <person name="Fleck J."/>
            <person name="Clement B."/>
            <person name="Philipps G."/>
            <person name="Herve C."/>
            <person name="Bardet C."/>
            <person name="Tremousaygue D."/>
            <person name="Lescure B."/>
            <person name="Lacomme C."/>
            <person name="Roby D."/>
            <person name="Jourjon M.-F."/>
            <person name="Chabrier P."/>
            <person name="Charpenteau J.-L."/>
            <person name="Desprez T."/>
            <person name="Amselem J."/>
            <person name="Chiapello H."/>
            <person name="Hoefte H."/>
        </authorList>
    </citation>
    <scope>NUCLEOTIDE SEQUENCE [LARGE SCALE MRNA] OF 1-72 AND 114-191</scope>
    <source>
        <strain>cv. Columbia</strain>
        <tissue>Dry seed</tissue>
    </source>
</reference>
<proteinExistence type="evidence at transcript level"/>
<accession>Q42431</accession>
<accession>Q42180</accession>
<accession>Q42229</accession>
<accession>Q8LDN9</accession>
<accession>Q96277</accession>
<protein>
    <recommendedName>
        <fullName>Oleosin 20.3 kDa</fullName>
    </recommendedName>
    <alternativeName>
        <fullName>Oleosin type 4</fullName>
    </alternativeName>
</protein>
<sequence length="191" mass="20313">MANVDRDRRVHVDRTDKRVHQPNYEDDVGFGGYGGYGAGSDYKSRGPSTNQILALIAGVPIGGTLLTLAGLTLAGSVIGLLVSIPLFLLFSPVIVPAALTIGLAVTGILASGLFGLTGLSSVSWVLNYLRGTSDTVPEQLDYAKRRMADAVGYAGMKGKEMGQYVQDKAHEARETEFMTETHEPGKARRGS</sequence>
<gene>
    <name type="primary">OL2</name>
    <name type="ordered locus">At3g27660</name>
    <name type="ORF">MGF10.7</name>
</gene>
<name>OLEO4_ARATH</name>